<accession>S8AWN7</accession>
<gene>
    <name evidence="3" type="primary">opdD</name>
    <name type="ORF">PDE_01233</name>
</gene>
<reference key="1">
    <citation type="journal article" date="2013" name="PLoS ONE">
        <title>Genomic and secretomic analyses reveal unique features of the lignocellulolytic enzyme system of Penicillium decumbens.</title>
        <authorList>
            <person name="Liu G."/>
            <person name="Zhang L."/>
            <person name="Wei X."/>
            <person name="Zou G."/>
            <person name="Qin Y."/>
            <person name="Ma L."/>
            <person name="Li J."/>
            <person name="Zheng H."/>
            <person name="Wang S."/>
            <person name="Wang C."/>
            <person name="Xun L."/>
            <person name="Zhao G.-P."/>
            <person name="Zhou Z."/>
            <person name="Qu Y."/>
        </authorList>
    </citation>
    <scope>NUCLEOTIDE SEQUENCE [LARGE SCALE GENOMIC DNA]</scope>
    <source>
        <strain>114-2 / CGMCC 5302</strain>
    </source>
</reference>
<reference key="2">
    <citation type="journal article" date="2022" name="Mar. Drugs">
        <title>Identification of PKS-NRPS Hybrid Metabolites in Marine-Derived Penicillium oxalicum.</title>
        <authorList>
            <person name="Li H."/>
            <person name="Zhang W."/>
            <person name="Zhang X."/>
            <person name="Tang S."/>
            <person name="Men P."/>
            <person name="Xiong M."/>
            <person name="Li Z."/>
            <person name="Zhang Y."/>
            <person name="Huang X."/>
            <person name="Lu X."/>
        </authorList>
    </citation>
    <scope>FUNCTION</scope>
    <scope>DISRUPTION PHENOTYPE</scope>
</reference>
<dbReference type="EC" id="1.-.-.-" evidence="5"/>
<dbReference type="EMBL" id="KB644408">
    <property type="protein sequence ID" value="EPS26297.1"/>
    <property type="molecule type" value="Genomic_DNA"/>
</dbReference>
<dbReference type="SMR" id="S8AWN7"/>
<dbReference type="STRING" id="933388.S8AWN7"/>
<dbReference type="eggNOG" id="KOG3855">
    <property type="taxonomic scope" value="Eukaryota"/>
</dbReference>
<dbReference type="HOGENOM" id="CLU_009665_14_2_1"/>
<dbReference type="OrthoDB" id="2096480at2759"/>
<dbReference type="PhylomeDB" id="S8AWN7"/>
<dbReference type="Proteomes" id="UP000019376">
    <property type="component" value="Unassembled WGS sequence"/>
</dbReference>
<dbReference type="GO" id="GO:0071949">
    <property type="term" value="F:FAD binding"/>
    <property type="evidence" value="ECO:0007669"/>
    <property type="project" value="InterPro"/>
</dbReference>
<dbReference type="GO" id="GO:0016709">
    <property type="term" value="F:oxidoreductase activity, acting on paired donors, with incorporation or reduction of molecular oxygen, NAD(P)H as one donor, and incorporation of one atom of oxygen"/>
    <property type="evidence" value="ECO:0007669"/>
    <property type="project" value="UniProtKB-ARBA"/>
</dbReference>
<dbReference type="Gene3D" id="3.40.30.120">
    <property type="match status" value="1"/>
</dbReference>
<dbReference type="Gene3D" id="3.30.9.10">
    <property type="entry name" value="D-Amino Acid Oxidase, subunit A, domain 2"/>
    <property type="match status" value="1"/>
</dbReference>
<dbReference type="Gene3D" id="3.50.50.60">
    <property type="entry name" value="FAD/NAD(P)-binding domain"/>
    <property type="match status" value="1"/>
</dbReference>
<dbReference type="InterPro" id="IPR002938">
    <property type="entry name" value="FAD-bd"/>
</dbReference>
<dbReference type="InterPro" id="IPR036188">
    <property type="entry name" value="FAD/NAD-bd_sf"/>
</dbReference>
<dbReference type="InterPro" id="IPR050641">
    <property type="entry name" value="RIFMO-like"/>
</dbReference>
<dbReference type="PANTHER" id="PTHR43004:SF21">
    <property type="entry name" value="FAD-BINDING DOMAIN-CONTAINING PROTEIN-RELATED"/>
    <property type="match status" value="1"/>
</dbReference>
<dbReference type="PANTHER" id="PTHR43004">
    <property type="entry name" value="TRK SYSTEM POTASSIUM UPTAKE PROTEIN"/>
    <property type="match status" value="1"/>
</dbReference>
<dbReference type="Pfam" id="PF01494">
    <property type="entry name" value="FAD_binding_3"/>
    <property type="match status" value="1"/>
</dbReference>
<dbReference type="PRINTS" id="PR00420">
    <property type="entry name" value="RNGMNOXGNASE"/>
</dbReference>
<dbReference type="SUPFAM" id="SSF51905">
    <property type="entry name" value="FAD/NAD(P)-binding domain"/>
    <property type="match status" value="1"/>
</dbReference>
<proteinExistence type="inferred from homology"/>
<name>OPDD_PENO1</name>
<sequence>MDLTLARTMEILRPLGLADGLRARGVPSTYPFTVRFSSGLGMKHSLSEWKLPSADQLRERIMSQNDGTMPLEPWLRVSGDVMEAFLKEKCEESHLVTLRFGWSVTQVIESATEVETRVRNPHTGGEKVIRSQYAVGCDGASSLVRKNMGIALDGGPIHSSVVLIHFKSRDLTRLHRQGRFWHTFFLLDPTISGDSVGGAIIAQDEVDTWTVHDFRAPGSKQSISCAEETIYRVLGAMGGPYPITIDEIIQQSTWTPSIALAKSYTGPLHRVFLAGDACHQTIPSGGYGMNMGIADVFDLGWKLAAMIQGWGGAQLVLSYEQERRPVAELMQHWGKVHAGKLMGLASAVTLNATIIDASDARGEEMRQKIHEYVQSNDAHNQCFGVEHGHQHHSDITVTSASSHPPFDPRSYTPTTHPGFRAPHVFLNDGSAIFDKFGKTLTLVEFIDAMPGPSSGGSFFRDTADEHHIPLRIASLVGEANAQQIWGARLVLVRPDHFVSWCGNDVGSKDEAKRVLLQAAGHICR</sequence>
<organism>
    <name type="scientific">Penicillium oxalicum (strain 114-2 / CGMCC 5302)</name>
    <name type="common">Penicillium decumbens</name>
    <dbReference type="NCBI Taxonomy" id="933388"/>
    <lineage>
        <taxon>Eukaryota</taxon>
        <taxon>Fungi</taxon>
        <taxon>Dikarya</taxon>
        <taxon>Ascomycota</taxon>
        <taxon>Pezizomycotina</taxon>
        <taxon>Eurotiomycetes</taxon>
        <taxon>Eurotiomycetidae</taxon>
        <taxon>Eurotiales</taxon>
        <taxon>Aspergillaceae</taxon>
        <taxon>Penicillium</taxon>
    </lineage>
</organism>
<keyword id="KW-0274">FAD</keyword>
<keyword id="KW-0285">Flavoprotein</keyword>
<keyword id="KW-0503">Monooxygenase</keyword>
<keyword id="KW-0560">Oxidoreductase</keyword>
<keyword id="KW-1185">Reference proteome</keyword>
<feature type="chain" id="PRO_0000457063" description="FAD-dependent monooxygenase opdD">
    <location>
        <begin position="1"/>
        <end position="524"/>
    </location>
</feature>
<feature type="binding site" evidence="1">
    <location>
        <position position="48"/>
    </location>
    <ligand>
        <name>FAD</name>
        <dbReference type="ChEBI" id="CHEBI:57692"/>
    </ligand>
</feature>
<feature type="binding site" evidence="1">
    <location>
        <position position="145"/>
    </location>
    <ligand>
        <name>FAD</name>
        <dbReference type="ChEBI" id="CHEBI:57692"/>
    </ligand>
</feature>
<comment type="function">
    <text evidence="2 4">FAD-dependent monooxygenase; part of the gene cluster that mediates the biosynthesis of oxopyrrolidines, polyketide-amino acid hybrid compounds with feature structures of tetramic acid (PubMed:36005526). Does not seem to play a role in oxopyrrolidines A and B biosynthesis (PubMed:36005526). May be involved in further modifications of these oxopyrrolidines (Probable).</text>
</comment>
<comment type="pathway">
    <text evidence="5">Secondary metabolite biosynthesis.</text>
</comment>
<comment type="disruption phenotype">
    <text evidence="2">Does not affect the production of oxopyrrolidines A and B.</text>
</comment>
<comment type="similarity">
    <text evidence="4">Belongs to the paxM FAD-dependent monooxygenase family.</text>
</comment>
<evidence type="ECO:0000250" key="1">
    <source>
        <dbReference type="UniProtKB" id="B8M9J8"/>
    </source>
</evidence>
<evidence type="ECO:0000269" key="2">
    <source>
    </source>
</evidence>
<evidence type="ECO:0000303" key="3">
    <source>
    </source>
</evidence>
<evidence type="ECO:0000305" key="4"/>
<evidence type="ECO:0000305" key="5">
    <source>
    </source>
</evidence>
<protein>
    <recommendedName>
        <fullName evidence="3">FAD-dependent monooxygenase opdD</fullName>
        <ecNumber evidence="5">1.-.-.-</ecNumber>
    </recommendedName>
    <alternativeName>
        <fullName evidence="3">Oxopyrrolidines biosynthesis cluster protein D</fullName>
    </alternativeName>
</protein>